<accession>Q2YV56</accession>
<sequence>MFKVVICDDERIIREGLKQIIPWGDYHFNTIYTAKDGVEALSLIQQHQPELVITDIRMPRKNGVDLLNDIAHLDCNVIILSSYDDFEYMKAGIQHHVLDYLLKPVDHAQLEVILGRLVRTLLEQQSQNGRSLAPCHDAFQPLLKVEYDDYYVNQIVDQIKQSYQTKVTVSDLIQHIDVSESYAMRTFKDHVGITIVDYLNRYRILQSLQLLDRHYKHYEIADKVGFSEYKMFSYHFKKYLQMAPSDYCKQAK</sequence>
<feature type="chain" id="PRO_0000299108" description="Transcriptional regulatory protein HptR">
    <location>
        <begin position="1"/>
        <end position="252"/>
    </location>
</feature>
<feature type="domain" description="Response regulatory" evidence="2">
    <location>
        <begin position="3"/>
        <end position="118"/>
    </location>
</feature>
<feature type="domain" description="HTH araC/xylS-type" evidence="3">
    <location>
        <begin position="153"/>
        <end position="250"/>
    </location>
</feature>
<feature type="DNA-binding region" description="H-T-H motif" evidence="3">
    <location>
        <begin position="170"/>
        <end position="191"/>
    </location>
</feature>
<feature type="DNA-binding region" description="H-T-H motif" evidence="3">
    <location>
        <begin position="217"/>
        <end position="240"/>
    </location>
</feature>
<feature type="modified residue" description="4-aspartylphosphate" evidence="2">
    <location>
        <position position="55"/>
    </location>
</feature>
<proteinExistence type="inferred from homology"/>
<name>HPTR_STAAB</name>
<reference key="1">
    <citation type="journal article" date="2007" name="PLoS ONE">
        <title>Molecular correlates of host specialization in Staphylococcus aureus.</title>
        <authorList>
            <person name="Herron-Olson L."/>
            <person name="Fitzgerald J.R."/>
            <person name="Musser J.M."/>
            <person name="Kapur V."/>
        </authorList>
    </citation>
    <scope>NUCLEOTIDE SEQUENCE [LARGE SCALE GENOMIC DNA]</scope>
    <source>
        <strain>bovine RF122 / ET3-1</strain>
    </source>
</reference>
<protein>
    <recommendedName>
        <fullName>Transcriptional regulatory protein HptR</fullName>
    </recommendedName>
</protein>
<keyword id="KW-0963">Cytoplasm</keyword>
<keyword id="KW-0238">DNA-binding</keyword>
<keyword id="KW-0597">Phosphoprotein</keyword>
<keyword id="KW-0804">Transcription</keyword>
<keyword id="KW-0805">Transcription regulation</keyword>
<keyword id="KW-0902">Two-component regulatory system</keyword>
<organism>
    <name type="scientific">Staphylococcus aureus (strain bovine RF122 / ET3-1)</name>
    <dbReference type="NCBI Taxonomy" id="273036"/>
    <lineage>
        <taxon>Bacteria</taxon>
        <taxon>Bacillati</taxon>
        <taxon>Bacillota</taxon>
        <taxon>Bacilli</taxon>
        <taxon>Bacillales</taxon>
        <taxon>Staphylococcaceae</taxon>
        <taxon>Staphylococcus</taxon>
    </lineage>
</organism>
<gene>
    <name type="primary">hptR</name>
    <name type="ordered locus">SAB0161c</name>
</gene>
<dbReference type="EMBL" id="AJ938182">
    <property type="protein sequence ID" value="CAI79849.1"/>
    <property type="molecule type" value="Genomic_DNA"/>
</dbReference>
<dbReference type="RefSeq" id="WP_000477516.1">
    <property type="nucleotide sequence ID" value="NC_007622.1"/>
</dbReference>
<dbReference type="SMR" id="Q2YV56"/>
<dbReference type="KEGG" id="sab:SAB0161c"/>
<dbReference type="HOGENOM" id="CLU_000445_5_1_9"/>
<dbReference type="GO" id="GO:0005737">
    <property type="term" value="C:cytoplasm"/>
    <property type="evidence" value="ECO:0007669"/>
    <property type="project" value="UniProtKB-SubCell"/>
</dbReference>
<dbReference type="GO" id="GO:0003700">
    <property type="term" value="F:DNA-binding transcription factor activity"/>
    <property type="evidence" value="ECO:0007669"/>
    <property type="project" value="InterPro"/>
</dbReference>
<dbReference type="GO" id="GO:0043565">
    <property type="term" value="F:sequence-specific DNA binding"/>
    <property type="evidence" value="ECO:0007669"/>
    <property type="project" value="InterPro"/>
</dbReference>
<dbReference type="GO" id="GO:0000160">
    <property type="term" value="P:phosphorelay signal transduction system"/>
    <property type="evidence" value="ECO:0007669"/>
    <property type="project" value="UniProtKB-KW"/>
</dbReference>
<dbReference type="CDD" id="cd17536">
    <property type="entry name" value="REC_YesN-like"/>
    <property type="match status" value="1"/>
</dbReference>
<dbReference type="Gene3D" id="3.40.50.2300">
    <property type="match status" value="1"/>
</dbReference>
<dbReference type="Gene3D" id="1.10.10.60">
    <property type="entry name" value="Homeodomain-like"/>
    <property type="match status" value="2"/>
</dbReference>
<dbReference type="InterPro" id="IPR011006">
    <property type="entry name" value="CheY-like_superfamily"/>
</dbReference>
<dbReference type="InterPro" id="IPR009057">
    <property type="entry name" value="Homeodomain-like_sf"/>
</dbReference>
<dbReference type="InterPro" id="IPR051552">
    <property type="entry name" value="HptR"/>
</dbReference>
<dbReference type="InterPro" id="IPR018060">
    <property type="entry name" value="HTH_AraC"/>
</dbReference>
<dbReference type="InterPro" id="IPR001789">
    <property type="entry name" value="Sig_transdc_resp-reg_receiver"/>
</dbReference>
<dbReference type="PANTHER" id="PTHR42713">
    <property type="entry name" value="HISTIDINE KINASE-RELATED"/>
    <property type="match status" value="1"/>
</dbReference>
<dbReference type="PANTHER" id="PTHR42713:SF3">
    <property type="entry name" value="TRANSCRIPTIONAL REGULATORY PROTEIN HPTR"/>
    <property type="match status" value="1"/>
</dbReference>
<dbReference type="Pfam" id="PF12833">
    <property type="entry name" value="HTH_18"/>
    <property type="match status" value="1"/>
</dbReference>
<dbReference type="Pfam" id="PF00072">
    <property type="entry name" value="Response_reg"/>
    <property type="match status" value="1"/>
</dbReference>
<dbReference type="SMART" id="SM00342">
    <property type="entry name" value="HTH_ARAC"/>
    <property type="match status" value="1"/>
</dbReference>
<dbReference type="SMART" id="SM00448">
    <property type="entry name" value="REC"/>
    <property type="match status" value="1"/>
</dbReference>
<dbReference type="SUPFAM" id="SSF52172">
    <property type="entry name" value="CheY-like"/>
    <property type="match status" value="1"/>
</dbReference>
<dbReference type="SUPFAM" id="SSF46689">
    <property type="entry name" value="Homeodomain-like"/>
    <property type="match status" value="2"/>
</dbReference>
<dbReference type="PROSITE" id="PS01124">
    <property type="entry name" value="HTH_ARAC_FAMILY_2"/>
    <property type="match status" value="1"/>
</dbReference>
<dbReference type="PROSITE" id="PS50110">
    <property type="entry name" value="RESPONSE_REGULATORY"/>
    <property type="match status" value="1"/>
</dbReference>
<comment type="function">
    <text evidence="1">Member of the two-component regulatory system HptS/HptR that regulates genes involved in hexose phosphate transport system in response to changes in extracellular phosphate sources. Activates uhpT expression to facilitate glucose-6-phosphate/G6P utilization by directly binding to its promoter. Antagonizes CcpA-dependent transcription of a subset of CcpA-regulated genes involved in antibiotic susceptibility.</text>
</comment>
<comment type="subcellular location">
    <subcellularLocation>
        <location evidence="4">Cytoplasm</location>
    </subcellularLocation>
</comment>
<comment type="PTM">
    <text evidence="1">Phosphorylated by HptS.</text>
</comment>
<evidence type="ECO:0000250" key="1">
    <source>
        <dbReference type="UniProtKB" id="Q2G1E1"/>
    </source>
</evidence>
<evidence type="ECO:0000255" key="2">
    <source>
        <dbReference type="PROSITE-ProRule" id="PRU00169"/>
    </source>
</evidence>
<evidence type="ECO:0000255" key="3">
    <source>
        <dbReference type="PROSITE-ProRule" id="PRU00593"/>
    </source>
</evidence>
<evidence type="ECO:0000305" key="4"/>